<keyword id="KW-0067">ATP-binding</keyword>
<keyword id="KW-0547">Nucleotide-binding</keyword>
<keyword id="KW-1185">Reference proteome</keyword>
<keyword id="KW-0808">Transferase</keyword>
<accession>A9MKG0</accession>
<evidence type="ECO:0000255" key="1">
    <source>
        <dbReference type="HAMAP-Rule" id="MF_00397"/>
    </source>
</evidence>
<gene>
    <name evidence="1" type="primary">citG</name>
    <name type="ordered locus">SARI_02316</name>
</gene>
<name>CITG_SALAR</name>
<protein>
    <recommendedName>
        <fullName evidence="1">Probable 2-(5''-triphosphoribosyl)-3'-dephosphocoenzyme-A synthase</fullName>
        <shortName evidence="1">2-(5''-triphosphoribosyl)-3'-dephospho-CoA synthase</shortName>
        <ecNumber evidence="1">2.4.2.52</ecNumber>
    </recommendedName>
</protein>
<reference key="1">
    <citation type="submission" date="2007-11" db="EMBL/GenBank/DDBJ databases">
        <authorList>
            <consortium name="The Salmonella enterica serovar Arizonae Genome Sequencing Project"/>
            <person name="McClelland M."/>
            <person name="Sanderson E.K."/>
            <person name="Porwollik S."/>
            <person name="Spieth J."/>
            <person name="Clifton W.S."/>
            <person name="Fulton R."/>
            <person name="Chunyan W."/>
            <person name="Wollam A."/>
            <person name="Shah N."/>
            <person name="Pepin K."/>
            <person name="Bhonagiri V."/>
            <person name="Nash W."/>
            <person name="Johnson M."/>
            <person name="Thiruvilangam P."/>
            <person name="Wilson R."/>
        </authorList>
    </citation>
    <scope>NUCLEOTIDE SEQUENCE [LARGE SCALE GENOMIC DNA]</scope>
    <source>
        <strain>ATCC BAA-731 / CDC346-86 / RSK2980</strain>
    </source>
</reference>
<comment type="catalytic activity">
    <reaction evidence="1">
        <text>3'-dephospho-CoA + ATP = 2'-(5''-triphospho-alpha-D-ribosyl)-3'-dephospho-CoA + adenine</text>
        <dbReference type="Rhea" id="RHEA:15117"/>
        <dbReference type="ChEBI" id="CHEBI:16708"/>
        <dbReference type="ChEBI" id="CHEBI:30616"/>
        <dbReference type="ChEBI" id="CHEBI:57328"/>
        <dbReference type="ChEBI" id="CHEBI:61378"/>
        <dbReference type="EC" id="2.4.2.52"/>
    </reaction>
</comment>
<comment type="similarity">
    <text evidence="1">Belongs to the CitG/MdcB family.</text>
</comment>
<sequence length="298" mass="32700">MMSIPVNPTNASIQPQSLYDAWADLAWRAMLTEVNLSPKPGLVDRLNCGAHKDMALEDFHRSAEAIRDWLPRFMEYGASCTRLPPESVLAGLRPLGMACEAAMFRATAGVNTHKGSIFSLGLLCAAIGRLYQLRQPITAQTLCATSAAFCRGLTARELRQNNLQLTAGQRLYQQLGLTGARGEAEAGYPLVIRHALPHYRALLAQGRDPELALLDTLLLLMSLNGDTNVASRGGSDGLRWLQQHASFLLRQGGIRTPDDLVYLHQFNQQCIERNLSPGGSADLLIVTWFLAQISQVNH</sequence>
<proteinExistence type="inferred from homology"/>
<feature type="chain" id="PRO_1000080328" description="Probable 2-(5''-triphosphoribosyl)-3'-dephosphocoenzyme-A synthase">
    <location>
        <begin position="1"/>
        <end position="298"/>
    </location>
</feature>
<organism>
    <name type="scientific">Salmonella arizonae (strain ATCC BAA-731 / CDC346-86 / RSK2980)</name>
    <dbReference type="NCBI Taxonomy" id="41514"/>
    <lineage>
        <taxon>Bacteria</taxon>
        <taxon>Pseudomonadati</taxon>
        <taxon>Pseudomonadota</taxon>
        <taxon>Gammaproteobacteria</taxon>
        <taxon>Enterobacterales</taxon>
        <taxon>Enterobacteriaceae</taxon>
        <taxon>Salmonella</taxon>
    </lineage>
</organism>
<dbReference type="EC" id="2.4.2.52" evidence="1"/>
<dbReference type="EMBL" id="CP000880">
    <property type="protein sequence ID" value="ABX22179.1"/>
    <property type="molecule type" value="Genomic_DNA"/>
</dbReference>
<dbReference type="STRING" id="41514.SARI_02316"/>
<dbReference type="KEGG" id="ses:SARI_02316"/>
<dbReference type="HOGENOM" id="CLU_056179_1_0_6"/>
<dbReference type="Proteomes" id="UP000002084">
    <property type="component" value="Chromosome"/>
</dbReference>
<dbReference type="GO" id="GO:0005524">
    <property type="term" value="F:ATP binding"/>
    <property type="evidence" value="ECO:0007669"/>
    <property type="project" value="UniProtKB-KW"/>
</dbReference>
<dbReference type="GO" id="GO:0046917">
    <property type="term" value="F:triphosphoribosyl-dephospho-CoA synthase activity"/>
    <property type="evidence" value="ECO:0007669"/>
    <property type="project" value="UniProtKB-UniRule"/>
</dbReference>
<dbReference type="GO" id="GO:0051191">
    <property type="term" value="P:prosthetic group biosynthetic process"/>
    <property type="evidence" value="ECO:0007669"/>
    <property type="project" value="TreeGrafter"/>
</dbReference>
<dbReference type="FunFam" id="1.10.4200.10:FF:000001">
    <property type="entry name" value="Triphosphoribosyl-dephospho-CoA synthase CitG"/>
    <property type="match status" value="1"/>
</dbReference>
<dbReference type="Gene3D" id="1.10.4200.10">
    <property type="entry name" value="Triphosphoribosyl-dephospho-CoA protein"/>
    <property type="match status" value="1"/>
</dbReference>
<dbReference type="HAMAP" id="MF_00397">
    <property type="entry name" value="CitG"/>
    <property type="match status" value="1"/>
</dbReference>
<dbReference type="InterPro" id="IPR002736">
    <property type="entry name" value="CitG"/>
</dbReference>
<dbReference type="InterPro" id="IPR017551">
    <property type="entry name" value="TriPribosyl-deP-CoA_syn_CitG"/>
</dbReference>
<dbReference type="NCBIfam" id="TIGR03125">
    <property type="entry name" value="citrate_citG"/>
    <property type="match status" value="1"/>
</dbReference>
<dbReference type="NCBIfam" id="NF007503">
    <property type="entry name" value="PRK10096.1"/>
    <property type="match status" value="1"/>
</dbReference>
<dbReference type="PANTHER" id="PTHR30201:SF2">
    <property type="entry name" value="2-(5''-TRIPHOSPHORIBOSYL)-3'-DEPHOSPHOCOENZYME-A SYNTHASE"/>
    <property type="match status" value="1"/>
</dbReference>
<dbReference type="PANTHER" id="PTHR30201">
    <property type="entry name" value="TRIPHOSPHORIBOSYL-DEPHOSPHO-COA SYNTHASE"/>
    <property type="match status" value="1"/>
</dbReference>
<dbReference type="Pfam" id="PF01874">
    <property type="entry name" value="CitG"/>
    <property type="match status" value="1"/>
</dbReference>